<reference key="1">
    <citation type="journal article" date="2009" name="Nature">
        <title>Evolution of pathogenicity and sexual reproduction in eight Candida genomes.</title>
        <authorList>
            <person name="Butler G."/>
            <person name="Rasmussen M.D."/>
            <person name="Lin M.F."/>
            <person name="Santos M.A.S."/>
            <person name="Sakthikumar S."/>
            <person name="Munro C.A."/>
            <person name="Rheinbay E."/>
            <person name="Grabherr M."/>
            <person name="Forche A."/>
            <person name="Reedy J.L."/>
            <person name="Agrafioti I."/>
            <person name="Arnaud M.B."/>
            <person name="Bates S."/>
            <person name="Brown A.J.P."/>
            <person name="Brunke S."/>
            <person name="Costanzo M.C."/>
            <person name="Fitzpatrick D.A."/>
            <person name="de Groot P.W.J."/>
            <person name="Harris D."/>
            <person name="Hoyer L.L."/>
            <person name="Hube B."/>
            <person name="Klis F.M."/>
            <person name="Kodira C."/>
            <person name="Lennard N."/>
            <person name="Logue M.E."/>
            <person name="Martin R."/>
            <person name="Neiman A.M."/>
            <person name="Nikolaou E."/>
            <person name="Quail M.A."/>
            <person name="Quinn J."/>
            <person name="Santos M.C."/>
            <person name="Schmitzberger F.F."/>
            <person name="Sherlock G."/>
            <person name="Shah P."/>
            <person name="Silverstein K.A.T."/>
            <person name="Skrzypek M.S."/>
            <person name="Soll D."/>
            <person name="Staggs R."/>
            <person name="Stansfield I."/>
            <person name="Stumpf M.P.H."/>
            <person name="Sudbery P.E."/>
            <person name="Srikantha T."/>
            <person name="Zeng Q."/>
            <person name="Berman J."/>
            <person name="Berriman M."/>
            <person name="Heitman J."/>
            <person name="Gow N.A.R."/>
            <person name="Lorenz M.C."/>
            <person name="Birren B.W."/>
            <person name="Kellis M."/>
            <person name="Cuomo C.A."/>
        </authorList>
    </citation>
    <scope>NUCLEOTIDE SEQUENCE [LARGE SCALE GENOMIC DNA]</scope>
    <source>
        <strain>ATCC MYA-3404 / T1</strain>
    </source>
</reference>
<organism>
    <name type="scientific">Candida tropicalis (strain ATCC MYA-3404 / T1)</name>
    <name type="common">Yeast</name>
    <dbReference type="NCBI Taxonomy" id="294747"/>
    <lineage>
        <taxon>Eukaryota</taxon>
        <taxon>Fungi</taxon>
        <taxon>Dikarya</taxon>
        <taxon>Ascomycota</taxon>
        <taxon>Saccharomycotina</taxon>
        <taxon>Pichiomycetes</taxon>
        <taxon>Debaryomycetaceae</taxon>
        <taxon>Candida/Lodderomyces clade</taxon>
        <taxon>Candida</taxon>
    </lineage>
</organism>
<keyword id="KW-0175">Coiled coil</keyword>
<keyword id="KW-0256">Endoplasmic reticulum</keyword>
<keyword id="KW-0472">Membrane</keyword>
<keyword id="KW-0509">mRNA transport</keyword>
<keyword id="KW-1185">Reference proteome</keyword>
<keyword id="KW-0694">RNA-binding</keyword>
<keyword id="KW-0813">Transport</keyword>
<sequence length="494" mass="56196">MPDTPVSPSKNNVKTSSTPVSSSTKVIDSLHSKIDELTDELTTLKQSHQELTKKHSIVAKKNDSFVDQLANAKHENDMLSALLKRKERRILDLEDQYNDLNSQIENLSLSNKNMKIRCENLQNNSNASIAEFERLKISYDALIASQMEYKNHYQQELNTLQTSFDKYRTENTKRYEDLQSSISSNDKDIDTLLDSLTNKRKTMDNIYVNKNNKILQLLTSLASLIKLHAEDTKGQVEQNVDVIKILMEKYPDLQEKILEKEKVEVDLDEIISHSNEILANTSFEEDATLINSPDLDSQSNLNSGAATPVQNSGPFRKKKNYKRNSMILKDSPSGIPENSVPSSLPKKPQVNNNIINIPKNRSKFNTPPTTPRQFSNQSTDFEVTHQWNGNNNQHNNSGHYNNNNHRRTTSYDARSDNGGNRRQHSQGSNYNNNNNNNNNNNNGFVRRSGSVRNGSNNNNNNNHGKQAKRRSTYNPNNNSKRNSQIFDSNFALNV</sequence>
<gene>
    <name type="primary">SHE3</name>
    <name type="ORF">CTRG_05414</name>
</gene>
<dbReference type="EMBL" id="GG692402">
    <property type="protein sequence ID" value="EER30962.1"/>
    <property type="molecule type" value="Genomic_DNA"/>
</dbReference>
<dbReference type="RefSeq" id="XP_002551116.1">
    <property type="nucleotide sequence ID" value="XM_002551070.1"/>
</dbReference>
<dbReference type="SMR" id="C5MH60"/>
<dbReference type="STRING" id="294747.C5MH60"/>
<dbReference type="EnsemblFungi" id="CTRG_05414-t43_1">
    <property type="protein sequence ID" value="CTRG_05414-t43_1-p1"/>
    <property type="gene ID" value="CTRG_05414"/>
</dbReference>
<dbReference type="GeneID" id="8299739"/>
<dbReference type="KEGG" id="ctp:CTRG_05414"/>
<dbReference type="VEuPathDB" id="FungiDB:CTRG_05414"/>
<dbReference type="eggNOG" id="ENOG502QSQX">
    <property type="taxonomic scope" value="Eukaryota"/>
</dbReference>
<dbReference type="HOGENOM" id="CLU_042310_0_0_1"/>
<dbReference type="OrthoDB" id="6088208at2759"/>
<dbReference type="Proteomes" id="UP000002037">
    <property type="component" value="Unassembled WGS sequence"/>
</dbReference>
<dbReference type="GO" id="GO:0005789">
    <property type="term" value="C:endoplasmic reticulum membrane"/>
    <property type="evidence" value="ECO:0007669"/>
    <property type="project" value="UniProtKB-SubCell"/>
</dbReference>
<dbReference type="GO" id="GO:0003723">
    <property type="term" value="F:RNA binding"/>
    <property type="evidence" value="ECO:0007669"/>
    <property type="project" value="UniProtKB-KW"/>
</dbReference>
<dbReference type="GO" id="GO:0048309">
    <property type="term" value="P:endoplasmic reticulum inheritance"/>
    <property type="evidence" value="ECO:0007669"/>
    <property type="project" value="InterPro"/>
</dbReference>
<dbReference type="GO" id="GO:0051028">
    <property type="term" value="P:mRNA transport"/>
    <property type="evidence" value="ECO:0007669"/>
    <property type="project" value="UniProtKB-KW"/>
</dbReference>
<dbReference type="Gene3D" id="1.10.287.1490">
    <property type="match status" value="1"/>
</dbReference>
<dbReference type="InterPro" id="IPR031398">
    <property type="entry name" value="She3"/>
</dbReference>
<dbReference type="Pfam" id="PF17078">
    <property type="entry name" value="SHE3"/>
    <property type="match status" value="1"/>
</dbReference>
<dbReference type="SUPFAM" id="SSF57997">
    <property type="entry name" value="Tropomyosin"/>
    <property type="match status" value="1"/>
</dbReference>
<proteinExistence type="inferred from homology"/>
<protein>
    <recommendedName>
        <fullName>SWI5-dependent HO expression protein 3</fullName>
    </recommendedName>
</protein>
<name>SHE3_CANTT</name>
<comment type="function">
    <text evidence="1">RNA-binding protein that binds specific mRNAs including the ASH1 mRNA, coding for a repressor of the HO endonuclease. Part of the mRNA localization machinery that restricts accumulation of certain proteins to the bud and in the daughter cell. Required for the delivery of cortical endoplasmic reticulum into the emerging bud (By similarity).</text>
</comment>
<comment type="subcellular location">
    <subcellularLocation>
        <location evidence="1">Endoplasmic reticulum membrane</location>
        <topology evidence="1">Peripheral membrane protein</topology>
    </subcellularLocation>
</comment>
<comment type="similarity">
    <text evidence="4">Belongs to the SHE3 family.</text>
</comment>
<feature type="chain" id="PRO_0000408931" description="SWI5-dependent HO expression protein 3">
    <location>
        <begin position="1"/>
        <end position="494"/>
    </location>
</feature>
<feature type="region of interest" description="Disordered" evidence="3">
    <location>
        <begin position="1"/>
        <end position="25"/>
    </location>
</feature>
<feature type="region of interest" description="Disordered" evidence="3">
    <location>
        <begin position="291"/>
        <end position="494"/>
    </location>
</feature>
<feature type="coiled-coil region" evidence="2">
    <location>
        <begin position="24"/>
        <end position="173"/>
    </location>
</feature>
<feature type="compositionally biased region" description="Polar residues" evidence="3">
    <location>
        <begin position="1"/>
        <end position="12"/>
    </location>
</feature>
<feature type="compositionally biased region" description="Low complexity" evidence="3">
    <location>
        <begin position="13"/>
        <end position="25"/>
    </location>
</feature>
<feature type="compositionally biased region" description="Polar residues" evidence="3">
    <location>
        <begin position="291"/>
        <end position="313"/>
    </location>
</feature>
<feature type="compositionally biased region" description="Polar residues" evidence="3">
    <location>
        <begin position="363"/>
        <end position="381"/>
    </location>
</feature>
<feature type="compositionally biased region" description="Low complexity" evidence="3">
    <location>
        <begin position="385"/>
        <end position="403"/>
    </location>
</feature>
<feature type="compositionally biased region" description="Polar residues" evidence="3">
    <location>
        <begin position="417"/>
        <end position="428"/>
    </location>
</feature>
<feature type="compositionally biased region" description="Low complexity" evidence="3">
    <location>
        <begin position="429"/>
        <end position="462"/>
    </location>
</feature>
<feature type="compositionally biased region" description="Polar residues" evidence="3">
    <location>
        <begin position="472"/>
        <end position="494"/>
    </location>
</feature>
<accession>C5MH60</accession>
<evidence type="ECO:0000250" key="1"/>
<evidence type="ECO:0000255" key="2"/>
<evidence type="ECO:0000256" key="3">
    <source>
        <dbReference type="SAM" id="MobiDB-lite"/>
    </source>
</evidence>
<evidence type="ECO:0000305" key="4"/>